<name>TRPB_STAA8</name>
<reference key="1">
    <citation type="book" date="2006" name="Gram positive pathogens, 2nd edition">
        <title>The Staphylococcus aureus NCTC 8325 genome.</title>
        <editorList>
            <person name="Fischetti V."/>
            <person name="Novick R."/>
            <person name="Ferretti J."/>
            <person name="Portnoy D."/>
            <person name="Rood J."/>
        </editorList>
        <authorList>
            <person name="Gillaspy A.F."/>
            <person name="Worrell V."/>
            <person name="Orvis J."/>
            <person name="Roe B.A."/>
            <person name="Dyer D.W."/>
            <person name="Iandolo J.J."/>
        </authorList>
    </citation>
    <scope>NUCLEOTIDE SEQUENCE [LARGE SCALE GENOMIC DNA]</scope>
    <source>
        <strain>NCTC 8325 / PS 47</strain>
    </source>
</reference>
<organism>
    <name type="scientific">Staphylococcus aureus (strain NCTC 8325 / PS 47)</name>
    <dbReference type="NCBI Taxonomy" id="93061"/>
    <lineage>
        <taxon>Bacteria</taxon>
        <taxon>Bacillati</taxon>
        <taxon>Bacillota</taxon>
        <taxon>Bacilli</taxon>
        <taxon>Bacillales</taxon>
        <taxon>Staphylococcaceae</taxon>
        <taxon>Staphylococcus</taxon>
    </lineage>
</organism>
<proteinExistence type="inferred from homology"/>
<sequence>MNKQIQTEADELGFFGEYGGQYVPETLMPAIIELKKAYKEAKADPEFQRELEYYLSEYVGRATPLTYAASYTESLGGAKIYLKREDLNHTGAHKINNALGQALLAKRMGKKKLVAETGAGQHGVASATVAALFDMELVVFMGSEDIKRQQLNVFRMELLGAKVVAVEDGQGTLSDAVNKALQYWVSHVDDTHYLLGSALGPDPFPTIVRDFQSVIGKEIKSQILKKEGRLPDAIVACIGGGSNAIGTFYPFIKDDVALYGVEAAGQGDDTDKHALAIGKGSPGVLHGTKMYLIQDEDGQVQLAHSISAGLDYPGIGPEHSYYHDIGRVTFENASDTQAMNALINFTKHEGIIPAIESAHALSYVERLAPTMSKEDIIVVTISGRGDKDMETIRQYMVERGLAND</sequence>
<feature type="chain" id="PRO_1000018406" description="Tryptophan synthase beta chain">
    <location>
        <begin position="1"/>
        <end position="404"/>
    </location>
</feature>
<feature type="modified residue" description="N6-(pyridoxal phosphate)lysine" evidence="1">
    <location>
        <position position="94"/>
    </location>
</feature>
<gene>
    <name evidence="1" type="primary">trpB</name>
    <name type="ordered locus">SAOUHSC_01371</name>
</gene>
<accession>Q2FYR4</accession>
<evidence type="ECO:0000255" key="1">
    <source>
        <dbReference type="HAMAP-Rule" id="MF_00133"/>
    </source>
</evidence>
<protein>
    <recommendedName>
        <fullName evidence="1">Tryptophan synthase beta chain</fullName>
        <ecNumber evidence="1">4.2.1.20</ecNumber>
    </recommendedName>
</protein>
<dbReference type="EC" id="4.2.1.20" evidence="1"/>
<dbReference type="EMBL" id="CP000253">
    <property type="protein sequence ID" value="ABD30466.1"/>
    <property type="molecule type" value="Genomic_DNA"/>
</dbReference>
<dbReference type="RefSeq" id="WP_001041337.1">
    <property type="nucleotide sequence ID" value="NZ_LS483365.1"/>
</dbReference>
<dbReference type="RefSeq" id="YP_499898.1">
    <property type="nucleotide sequence ID" value="NC_007795.1"/>
</dbReference>
<dbReference type="SMR" id="Q2FYR4"/>
<dbReference type="STRING" id="93061.SAOUHSC_01371"/>
<dbReference type="PaxDb" id="1280-SAXN108_1388"/>
<dbReference type="GeneID" id="3920780"/>
<dbReference type="KEGG" id="sao:SAOUHSC_01371"/>
<dbReference type="PATRIC" id="fig|93061.5.peg.1255"/>
<dbReference type="eggNOG" id="COG0133">
    <property type="taxonomic scope" value="Bacteria"/>
</dbReference>
<dbReference type="HOGENOM" id="CLU_016734_3_1_9"/>
<dbReference type="OrthoDB" id="9766131at2"/>
<dbReference type="UniPathway" id="UPA00035">
    <property type="reaction ID" value="UER00044"/>
</dbReference>
<dbReference type="PRO" id="PR:Q2FYR4"/>
<dbReference type="Proteomes" id="UP000008816">
    <property type="component" value="Chromosome"/>
</dbReference>
<dbReference type="GO" id="GO:0005737">
    <property type="term" value="C:cytoplasm"/>
    <property type="evidence" value="ECO:0000318"/>
    <property type="project" value="GO_Central"/>
</dbReference>
<dbReference type="GO" id="GO:0004834">
    <property type="term" value="F:tryptophan synthase activity"/>
    <property type="evidence" value="ECO:0007669"/>
    <property type="project" value="UniProtKB-UniRule"/>
</dbReference>
<dbReference type="GO" id="GO:0000162">
    <property type="term" value="P:L-tryptophan biosynthetic process"/>
    <property type="evidence" value="ECO:0000318"/>
    <property type="project" value="GO_Central"/>
</dbReference>
<dbReference type="CDD" id="cd06446">
    <property type="entry name" value="Trp-synth_B"/>
    <property type="match status" value="1"/>
</dbReference>
<dbReference type="FunFam" id="3.40.50.1100:FF:000001">
    <property type="entry name" value="Tryptophan synthase beta chain"/>
    <property type="match status" value="1"/>
</dbReference>
<dbReference type="FunFam" id="3.40.50.1100:FF:000004">
    <property type="entry name" value="Tryptophan synthase beta chain"/>
    <property type="match status" value="1"/>
</dbReference>
<dbReference type="Gene3D" id="3.40.50.1100">
    <property type="match status" value="2"/>
</dbReference>
<dbReference type="HAMAP" id="MF_00133">
    <property type="entry name" value="Trp_synth_beta"/>
    <property type="match status" value="1"/>
</dbReference>
<dbReference type="InterPro" id="IPR006653">
    <property type="entry name" value="Trp_synth_b_CS"/>
</dbReference>
<dbReference type="InterPro" id="IPR006654">
    <property type="entry name" value="Trp_synth_beta"/>
</dbReference>
<dbReference type="InterPro" id="IPR023026">
    <property type="entry name" value="Trp_synth_beta/beta-like"/>
</dbReference>
<dbReference type="InterPro" id="IPR001926">
    <property type="entry name" value="TrpB-like_PALP"/>
</dbReference>
<dbReference type="InterPro" id="IPR036052">
    <property type="entry name" value="TrpB-like_PALP_sf"/>
</dbReference>
<dbReference type="NCBIfam" id="TIGR00263">
    <property type="entry name" value="trpB"/>
    <property type="match status" value="1"/>
</dbReference>
<dbReference type="PANTHER" id="PTHR48077:SF3">
    <property type="entry name" value="TRYPTOPHAN SYNTHASE"/>
    <property type="match status" value="1"/>
</dbReference>
<dbReference type="PANTHER" id="PTHR48077">
    <property type="entry name" value="TRYPTOPHAN SYNTHASE-RELATED"/>
    <property type="match status" value="1"/>
</dbReference>
<dbReference type="Pfam" id="PF00291">
    <property type="entry name" value="PALP"/>
    <property type="match status" value="1"/>
</dbReference>
<dbReference type="PIRSF" id="PIRSF001413">
    <property type="entry name" value="Trp_syn_beta"/>
    <property type="match status" value="1"/>
</dbReference>
<dbReference type="SUPFAM" id="SSF53686">
    <property type="entry name" value="Tryptophan synthase beta subunit-like PLP-dependent enzymes"/>
    <property type="match status" value="1"/>
</dbReference>
<dbReference type="PROSITE" id="PS00168">
    <property type="entry name" value="TRP_SYNTHASE_BETA"/>
    <property type="match status" value="1"/>
</dbReference>
<keyword id="KW-0028">Amino-acid biosynthesis</keyword>
<keyword id="KW-0057">Aromatic amino acid biosynthesis</keyword>
<keyword id="KW-0456">Lyase</keyword>
<keyword id="KW-0663">Pyridoxal phosphate</keyword>
<keyword id="KW-1185">Reference proteome</keyword>
<keyword id="KW-0822">Tryptophan biosynthesis</keyword>
<comment type="function">
    <text evidence="1">The beta subunit is responsible for the synthesis of L-tryptophan from indole and L-serine.</text>
</comment>
<comment type="catalytic activity">
    <reaction evidence="1">
        <text>(1S,2R)-1-C-(indol-3-yl)glycerol 3-phosphate + L-serine = D-glyceraldehyde 3-phosphate + L-tryptophan + H2O</text>
        <dbReference type="Rhea" id="RHEA:10532"/>
        <dbReference type="ChEBI" id="CHEBI:15377"/>
        <dbReference type="ChEBI" id="CHEBI:33384"/>
        <dbReference type="ChEBI" id="CHEBI:57912"/>
        <dbReference type="ChEBI" id="CHEBI:58866"/>
        <dbReference type="ChEBI" id="CHEBI:59776"/>
        <dbReference type="EC" id="4.2.1.20"/>
    </reaction>
</comment>
<comment type="cofactor">
    <cofactor evidence="1">
        <name>pyridoxal 5'-phosphate</name>
        <dbReference type="ChEBI" id="CHEBI:597326"/>
    </cofactor>
</comment>
<comment type="pathway">
    <text evidence="1">Amino-acid biosynthesis; L-tryptophan biosynthesis; L-tryptophan from chorismate: step 5/5.</text>
</comment>
<comment type="subunit">
    <text evidence="1">Tetramer of two alpha and two beta chains.</text>
</comment>
<comment type="similarity">
    <text evidence="1">Belongs to the TrpB family.</text>
</comment>